<proteinExistence type="evidence at protein level"/>
<dbReference type="EMBL" id="M86408">
    <property type="protein sequence ID" value="AAA35202.1"/>
    <property type="molecule type" value="Genomic_DNA"/>
</dbReference>
<dbReference type="EMBL" id="Z36059">
    <property type="protein sequence ID" value="CAA85153.1"/>
    <property type="molecule type" value="Genomic_DNA"/>
</dbReference>
<dbReference type="EMBL" id="Z21487">
    <property type="protein sequence ID" value="CAA79677.1"/>
    <property type="molecule type" value="Genomic_DNA"/>
</dbReference>
<dbReference type="EMBL" id="U02073">
    <property type="protein sequence ID" value="AAB60284.1"/>
    <property type="molecule type" value="Genomic_DNA"/>
</dbReference>
<dbReference type="EMBL" id="BK006936">
    <property type="protein sequence ID" value="DAA07305.1"/>
    <property type="molecule type" value="Genomic_DNA"/>
</dbReference>
<dbReference type="PIR" id="S28921">
    <property type="entry name" value="S28921"/>
</dbReference>
<dbReference type="RefSeq" id="NP_009750.1">
    <property type="nucleotide sequence ID" value="NM_001178539.1"/>
</dbReference>
<dbReference type="PDB" id="3J6X">
    <property type="method" value="EM"/>
    <property type="resolution" value="6.10 A"/>
    <property type="chains" value="61=1-160"/>
</dbReference>
<dbReference type="PDB" id="3J6Y">
    <property type="method" value="EM"/>
    <property type="resolution" value="6.10 A"/>
    <property type="chains" value="61=1-160"/>
</dbReference>
<dbReference type="PDB" id="3J77">
    <property type="method" value="EM"/>
    <property type="resolution" value="6.20 A"/>
    <property type="chains" value="71=1-160"/>
</dbReference>
<dbReference type="PDB" id="3J78">
    <property type="method" value="EM"/>
    <property type="resolution" value="6.30 A"/>
    <property type="chains" value="71=1-160"/>
</dbReference>
<dbReference type="PDB" id="3JCT">
    <property type="method" value="EM"/>
    <property type="resolution" value="3.08 A"/>
    <property type="chains" value="T=1-160"/>
</dbReference>
<dbReference type="PDB" id="4U3M">
    <property type="method" value="X-ray"/>
    <property type="resolution" value="3.00 A"/>
    <property type="chains" value="N1/n1=2-160"/>
</dbReference>
<dbReference type="PDB" id="4U3N">
    <property type="method" value="X-ray"/>
    <property type="resolution" value="3.20 A"/>
    <property type="chains" value="N1/n1=2-160"/>
</dbReference>
<dbReference type="PDB" id="4U3U">
    <property type="method" value="X-ray"/>
    <property type="resolution" value="2.90 A"/>
    <property type="chains" value="N1/n1=2-160"/>
</dbReference>
<dbReference type="PDB" id="4U4N">
    <property type="method" value="X-ray"/>
    <property type="resolution" value="3.10 A"/>
    <property type="chains" value="N1/n1=2-160"/>
</dbReference>
<dbReference type="PDB" id="4U4O">
    <property type="method" value="X-ray"/>
    <property type="resolution" value="3.60 A"/>
    <property type="chains" value="N1/n1=2-160"/>
</dbReference>
<dbReference type="PDB" id="4U4Q">
    <property type="method" value="X-ray"/>
    <property type="resolution" value="3.00 A"/>
    <property type="chains" value="N1/n1=2-160"/>
</dbReference>
<dbReference type="PDB" id="4U4R">
    <property type="method" value="X-ray"/>
    <property type="resolution" value="2.80 A"/>
    <property type="chains" value="N1/n1=2-160"/>
</dbReference>
<dbReference type="PDB" id="4U4U">
    <property type="method" value="X-ray"/>
    <property type="resolution" value="3.00 A"/>
    <property type="chains" value="N1/n1=2-160"/>
</dbReference>
<dbReference type="PDB" id="4U4Y">
    <property type="method" value="X-ray"/>
    <property type="resolution" value="3.20 A"/>
    <property type="chains" value="N1/n1=2-160"/>
</dbReference>
<dbReference type="PDB" id="4U4Z">
    <property type="method" value="X-ray"/>
    <property type="resolution" value="3.10 A"/>
    <property type="chains" value="N1/n1=2-160"/>
</dbReference>
<dbReference type="PDB" id="4U50">
    <property type="method" value="X-ray"/>
    <property type="resolution" value="3.20 A"/>
    <property type="chains" value="N1/n1=2-160"/>
</dbReference>
<dbReference type="PDB" id="4U51">
    <property type="method" value="X-ray"/>
    <property type="resolution" value="3.20 A"/>
    <property type="chains" value="N1/n1=2-160"/>
</dbReference>
<dbReference type="PDB" id="4U52">
    <property type="method" value="X-ray"/>
    <property type="resolution" value="3.00 A"/>
    <property type="chains" value="N1/n1=2-160"/>
</dbReference>
<dbReference type="PDB" id="4U53">
    <property type="method" value="X-ray"/>
    <property type="resolution" value="3.30 A"/>
    <property type="chains" value="N1/n1=2-160"/>
</dbReference>
<dbReference type="PDB" id="4U55">
    <property type="method" value="X-ray"/>
    <property type="resolution" value="3.20 A"/>
    <property type="chains" value="N1/n1=2-160"/>
</dbReference>
<dbReference type="PDB" id="4U56">
    <property type="method" value="X-ray"/>
    <property type="resolution" value="3.45 A"/>
    <property type="chains" value="N1/n1=2-160"/>
</dbReference>
<dbReference type="PDB" id="4U6F">
    <property type="method" value="X-ray"/>
    <property type="resolution" value="3.10 A"/>
    <property type="chains" value="N1/n1=2-160"/>
</dbReference>
<dbReference type="PDB" id="4V4B">
    <property type="method" value="EM"/>
    <property type="resolution" value="11.70 A"/>
    <property type="chains" value="BQ=1-100"/>
</dbReference>
<dbReference type="PDB" id="4V5Z">
    <property type="method" value="EM"/>
    <property type="resolution" value="8.70 A"/>
    <property type="chains" value="Bq=1-157"/>
</dbReference>
<dbReference type="PDB" id="4V6I">
    <property type="method" value="EM"/>
    <property type="resolution" value="8.80 A"/>
    <property type="chains" value="BU=1-160"/>
</dbReference>
<dbReference type="PDB" id="4V7F">
    <property type="method" value="EM"/>
    <property type="resolution" value="8.70 A"/>
    <property type="chains" value="T=1-160"/>
</dbReference>
<dbReference type="PDB" id="4V7R">
    <property type="method" value="X-ray"/>
    <property type="resolution" value="4.00 A"/>
    <property type="chains" value="BT/DT=1-160"/>
</dbReference>
<dbReference type="PDB" id="4V88">
    <property type="method" value="X-ray"/>
    <property type="resolution" value="3.00 A"/>
    <property type="chains" value="BT/DT=1-160"/>
</dbReference>
<dbReference type="PDB" id="4V8T">
    <property type="method" value="EM"/>
    <property type="resolution" value="8.10 A"/>
    <property type="chains" value="T=1-160"/>
</dbReference>
<dbReference type="PDB" id="4V8Y">
    <property type="method" value="EM"/>
    <property type="resolution" value="4.30 A"/>
    <property type="chains" value="BT=2-160"/>
</dbReference>
<dbReference type="PDB" id="4V8Z">
    <property type="method" value="EM"/>
    <property type="resolution" value="6.60 A"/>
    <property type="chains" value="BT=2-160"/>
</dbReference>
<dbReference type="PDB" id="4V91">
    <property type="method" value="EM"/>
    <property type="resolution" value="3.70 A"/>
    <property type="chains" value="T=1-160"/>
</dbReference>
<dbReference type="PDB" id="5APN">
    <property type="method" value="EM"/>
    <property type="resolution" value="3.91 A"/>
    <property type="chains" value="T=1-160"/>
</dbReference>
<dbReference type="PDB" id="5APO">
    <property type="method" value="EM"/>
    <property type="resolution" value="3.41 A"/>
    <property type="chains" value="T=1-160"/>
</dbReference>
<dbReference type="PDB" id="5DAT">
    <property type="method" value="X-ray"/>
    <property type="resolution" value="3.15 A"/>
    <property type="chains" value="N1/n1=2-160"/>
</dbReference>
<dbReference type="PDB" id="5DC3">
    <property type="method" value="X-ray"/>
    <property type="resolution" value="3.25 A"/>
    <property type="chains" value="N1/n1=2-160"/>
</dbReference>
<dbReference type="PDB" id="5DGE">
    <property type="method" value="X-ray"/>
    <property type="resolution" value="3.45 A"/>
    <property type="chains" value="N1/n1=2-160"/>
</dbReference>
<dbReference type="PDB" id="5DGF">
    <property type="method" value="X-ray"/>
    <property type="resolution" value="3.30 A"/>
    <property type="chains" value="N1/n1=2-160"/>
</dbReference>
<dbReference type="PDB" id="5DGV">
    <property type="method" value="X-ray"/>
    <property type="resolution" value="3.10 A"/>
    <property type="chains" value="N1/n1=2-160"/>
</dbReference>
<dbReference type="PDB" id="5FCI">
    <property type="method" value="X-ray"/>
    <property type="resolution" value="3.40 A"/>
    <property type="chains" value="N1/n1=2-160"/>
</dbReference>
<dbReference type="PDB" id="5FCJ">
    <property type="method" value="X-ray"/>
    <property type="resolution" value="3.10 A"/>
    <property type="chains" value="N1/n1=2-160"/>
</dbReference>
<dbReference type="PDB" id="5GAK">
    <property type="method" value="EM"/>
    <property type="resolution" value="3.88 A"/>
    <property type="chains" value="V=1-160"/>
</dbReference>
<dbReference type="PDB" id="5H4P">
    <property type="method" value="EM"/>
    <property type="resolution" value="3.07 A"/>
    <property type="chains" value="T=1-160"/>
</dbReference>
<dbReference type="PDB" id="5I4L">
    <property type="method" value="X-ray"/>
    <property type="resolution" value="3.10 A"/>
    <property type="chains" value="N1/n1=2-160"/>
</dbReference>
<dbReference type="PDB" id="5JCS">
    <property type="method" value="EM"/>
    <property type="resolution" value="9.50 A"/>
    <property type="chains" value="T=1-160"/>
</dbReference>
<dbReference type="PDB" id="5JUO">
    <property type="method" value="EM"/>
    <property type="resolution" value="4.00 A"/>
    <property type="chains" value="Y=1-160"/>
</dbReference>
<dbReference type="PDB" id="5JUP">
    <property type="method" value="EM"/>
    <property type="resolution" value="3.50 A"/>
    <property type="chains" value="Y=1-160"/>
</dbReference>
<dbReference type="PDB" id="5JUS">
    <property type="method" value="EM"/>
    <property type="resolution" value="4.20 A"/>
    <property type="chains" value="Y=1-160"/>
</dbReference>
<dbReference type="PDB" id="5JUT">
    <property type="method" value="EM"/>
    <property type="resolution" value="4.00 A"/>
    <property type="chains" value="Y=1-160"/>
</dbReference>
<dbReference type="PDB" id="5JUU">
    <property type="method" value="EM"/>
    <property type="resolution" value="4.00 A"/>
    <property type="chains" value="Y=1-160"/>
</dbReference>
<dbReference type="PDB" id="5LYB">
    <property type="method" value="X-ray"/>
    <property type="resolution" value="3.25 A"/>
    <property type="chains" value="N1/n1=2-160"/>
</dbReference>
<dbReference type="PDB" id="5M1J">
    <property type="method" value="EM"/>
    <property type="resolution" value="3.30 A"/>
    <property type="chains" value="T5=2-160"/>
</dbReference>
<dbReference type="PDB" id="5MC6">
    <property type="method" value="EM"/>
    <property type="resolution" value="3.80 A"/>
    <property type="chains" value="BJ=1-160"/>
</dbReference>
<dbReference type="PDB" id="5MEI">
    <property type="method" value="X-ray"/>
    <property type="resolution" value="3.50 A"/>
    <property type="chains" value="2/CV=2-160"/>
</dbReference>
<dbReference type="PDB" id="5NDG">
    <property type="method" value="X-ray"/>
    <property type="resolution" value="3.70 A"/>
    <property type="chains" value="N1/n1=2-160"/>
</dbReference>
<dbReference type="PDB" id="5NDV">
    <property type="method" value="X-ray"/>
    <property type="resolution" value="3.30 A"/>
    <property type="chains" value="N1/n1=2-160"/>
</dbReference>
<dbReference type="PDB" id="5NDW">
    <property type="method" value="X-ray"/>
    <property type="resolution" value="3.70 A"/>
    <property type="chains" value="N1/n1=2-160"/>
</dbReference>
<dbReference type="PDB" id="5OBM">
    <property type="method" value="X-ray"/>
    <property type="resolution" value="3.40 A"/>
    <property type="chains" value="N1/n1=2-160"/>
</dbReference>
<dbReference type="PDB" id="5ON6">
    <property type="method" value="X-ray"/>
    <property type="resolution" value="3.10 A"/>
    <property type="chains" value="2/CV=2-160"/>
</dbReference>
<dbReference type="PDB" id="5T62">
    <property type="method" value="EM"/>
    <property type="resolution" value="3.30 A"/>
    <property type="chains" value="g=1-160"/>
</dbReference>
<dbReference type="PDB" id="5T6R">
    <property type="method" value="EM"/>
    <property type="resolution" value="4.50 A"/>
    <property type="chains" value="g=1-160"/>
</dbReference>
<dbReference type="PDB" id="5TBW">
    <property type="method" value="X-ray"/>
    <property type="resolution" value="3.00 A"/>
    <property type="chains" value="2/CV=2-160"/>
</dbReference>
<dbReference type="PDB" id="5TGA">
    <property type="method" value="X-ray"/>
    <property type="resolution" value="3.30 A"/>
    <property type="chains" value="N1/n1=2-160"/>
</dbReference>
<dbReference type="PDB" id="5TGM">
    <property type="method" value="X-ray"/>
    <property type="resolution" value="3.50 A"/>
    <property type="chains" value="N1/n1=2-160"/>
</dbReference>
<dbReference type="PDB" id="6ELZ">
    <property type="method" value="EM"/>
    <property type="resolution" value="3.30 A"/>
    <property type="chains" value="T=1-160"/>
</dbReference>
<dbReference type="PDB" id="6EM5">
    <property type="method" value="EM"/>
    <property type="resolution" value="4.30 A"/>
    <property type="chains" value="T=1-160"/>
</dbReference>
<dbReference type="PDB" id="6FT6">
    <property type="method" value="EM"/>
    <property type="resolution" value="3.90 A"/>
    <property type="chains" value="T=1-160"/>
</dbReference>
<dbReference type="PDB" id="6GQ1">
    <property type="method" value="EM"/>
    <property type="resolution" value="4.40 A"/>
    <property type="chains" value="T=2-160"/>
</dbReference>
<dbReference type="PDB" id="6GQB">
    <property type="method" value="EM"/>
    <property type="resolution" value="3.90 A"/>
    <property type="chains" value="T=2-160"/>
</dbReference>
<dbReference type="PDB" id="6GQV">
    <property type="method" value="EM"/>
    <property type="resolution" value="4.00 A"/>
    <property type="chains" value="T=2-160"/>
</dbReference>
<dbReference type="PDB" id="6HD7">
    <property type="method" value="EM"/>
    <property type="resolution" value="3.40 A"/>
    <property type="chains" value="V=1-160"/>
</dbReference>
<dbReference type="PDB" id="6HHQ">
    <property type="method" value="X-ray"/>
    <property type="resolution" value="3.10 A"/>
    <property type="chains" value="2/CV=1-160"/>
</dbReference>
<dbReference type="PDB" id="6I7O">
    <property type="method" value="EM"/>
    <property type="resolution" value="5.30 A"/>
    <property type="chains" value="BJ/YJ=2-160"/>
</dbReference>
<dbReference type="PDB" id="6M62">
    <property type="method" value="EM"/>
    <property type="resolution" value="3.20 A"/>
    <property type="chains" value="T=1-160"/>
</dbReference>
<dbReference type="PDB" id="6N8J">
    <property type="method" value="EM"/>
    <property type="resolution" value="3.50 A"/>
    <property type="chains" value="T=1-160"/>
</dbReference>
<dbReference type="PDB" id="6N8K">
    <property type="method" value="EM"/>
    <property type="resolution" value="3.60 A"/>
    <property type="chains" value="T=1-160"/>
</dbReference>
<dbReference type="PDB" id="6N8L">
    <property type="method" value="EM"/>
    <property type="resolution" value="3.60 A"/>
    <property type="chains" value="T=1-160"/>
</dbReference>
<dbReference type="PDB" id="6N8M">
    <property type="method" value="EM"/>
    <property type="resolution" value="3.50 A"/>
    <property type="chains" value="g=1-160"/>
</dbReference>
<dbReference type="PDB" id="6N8N">
    <property type="method" value="EM"/>
    <property type="resolution" value="3.80 A"/>
    <property type="chains" value="g=1-160"/>
</dbReference>
<dbReference type="PDB" id="6N8O">
    <property type="method" value="EM"/>
    <property type="resolution" value="3.50 A"/>
    <property type="chains" value="g=1-160"/>
</dbReference>
<dbReference type="PDB" id="6OIG">
    <property type="method" value="EM"/>
    <property type="resolution" value="3.80 A"/>
    <property type="chains" value="T=2-160"/>
</dbReference>
<dbReference type="PDB" id="6Q8Y">
    <property type="method" value="EM"/>
    <property type="resolution" value="3.10 A"/>
    <property type="chains" value="BJ=2-160"/>
</dbReference>
<dbReference type="PDB" id="6QIK">
    <property type="method" value="EM"/>
    <property type="resolution" value="3.10 A"/>
    <property type="chains" value="T=1-160"/>
</dbReference>
<dbReference type="PDB" id="6QT0">
    <property type="method" value="EM"/>
    <property type="resolution" value="3.40 A"/>
    <property type="chains" value="T=1-160"/>
</dbReference>
<dbReference type="PDB" id="6QTZ">
    <property type="method" value="EM"/>
    <property type="resolution" value="3.50 A"/>
    <property type="chains" value="T=1-160"/>
</dbReference>
<dbReference type="PDB" id="6R84">
    <property type="method" value="EM"/>
    <property type="resolution" value="3.60 A"/>
    <property type="chains" value="V=2-160"/>
</dbReference>
<dbReference type="PDB" id="6R86">
    <property type="method" value="EM"/>
    <property type="resolution" value="3.40 A"/>
    <property type="chains" value="V=2-160"/>
</dbReference>
<dbReference type="PDB" id="6R87">
    <property type="method" value="EM"/>
    <property type="resolution" value="3.40 A"/>
    <property type="chains" value="V=2-160"/>
</dbReference>
<dbReference type="PDB" id="6RI5">
    <property type="method" value="EM"/>
    <property type="resolution" value="3.30 A"/>
    <property type="chains" value="T=1-160"/>
</dbReference>
<dbReference type="PDB" id="6RZZ">
    <property type="method" value="EM"/>
    <property type="resolution" value="3.20 A"/>
    <property type="chains" value="T=1-160"/>
</dbReference>
<dbReference type="PDB" id="6S05">
    <property type="method" value="EM"/>
    <property type="resolution" value="3.90 A"/>
    <property type="chains" value="T=1-160"/>
</dbReference>
<dbReference type="PDB" id="6S47">
    <property type="method" value="EM"/>
    <property type="resolution" value="3.28 A"/>
    <property type="chains" value="AV=2-160"/>
</dbReference>
<dbReference type="PDB" id="6SNT">
    <property type="method" value="EM"/>
    <property type="resolution" value="2.80 A"/>
    <property type="chains" value="z=1-160"/>
</dbReference>
<dbReference type="PDB" id="6SV4">
    <property type="method" value="EM"/>
    <property type="resolution" value="3.30 A"/>
    <property type="chains" value="BJ/YJ/ZJ=1-160"/>
</dbReference>
<dbReference type="PDB" id="6T4Q">
    <property type="method" value="EM"/>
    <property type="resolution" value="2.60 A"/>
    <property type="chains" value="LT=2-160"/>
</dbReference>
<dbReference type="PDB" id="6T7I">
    <property type="method" value="EM"/>
    <property type="resolution" value="3.20 A"/>
    <property type="chains" value="LT=1-160"/>
</dbReference>
<dbReference type="PDB" id="6T7T">
    <property type="method" value="EM"/>
    <property type="resolution" value="3.10 A"/>
    <property type="chains" value="LT=1-160"/>
</dbReference>
<dbReference type="PDB" id="6T83">
    <property type="method" value="EM"/>
    <property type="resolution" value="4.00 A"/>
    <property type="chains" value="E/Ty=1-160"/>
</dbReference>
<dbReference type="PDB" id="6TB3">
    <property type="method" value="EM"/>
    <property type="resolution" value="2.80 A"/>
    <property type="chains" value="BJ=2-160"/>
</dbReference>
<dbReference type="PDB" id="6TNU">
    <property type="method" value="EM"/>
    <property type="resolution" value="3.10 A"/>
    <property type="chains" value="BJ=2-160"/>
</dbReference>
<dbReference type="PDB" id="6WOO">
    <property type="method" value="EM"/>
    <property type="resolution" value="2.90 A"/>
    <property type="chains" value="T=2-159"/>
</dbReference>
<dbReference type="PDB" id="6XIQ">
    <property type="method" value="EM"/>
    <property type="resolution" value="4.20 A"/>
    <property type="chains" value="T=1-160"/>
</dbReference>
<dbReference type="PDB" id="6XIR">
    <property type="method" value="EM"/>
    <property type="resolution" value="3.20 A"/>
    <property type="chains" value="T=1-160"/>
</dbReference>
<dbReference type="PDB" id="6YLG">
    <property type="method" value="EM"/>
    <property type="resolution" value="3.00 A"/>
    <property type="chains" value="T=1-160"/>
</dbReference>
<dbReference type="PDB" id="6YLH">
    <property type="method" value="EM"/>
    <property type="resolution" value="3.10 A"/>
    <property type="chains" value="T=1-160"/>
</dbReference>
<dbReference type="PDB" id="6YLX">
    <property type="method" value="EM"/>
    <property type="resolution" value="3.90 A"/>
    <property type="chains" value="T=1-160"/>
</dbReference>
<dbReference type="PDB" id="6YLY">
    <property type="method" value="EM"/>
    <property type="resolution" value="3.80 A"/>
    <property type="chains" value="T=1-160"/>
</dbReference>
<dbReference type="PDB" id="6Z6J">
    <property type="method" value="EM"/>
    <property type="resolution" value="3.40 A"/>
    <property type="chains" value="LT=1-160"/>
</dbReference>
<dbReference type="PDB" id="6Z6K">
    <property type="method" value="EM"/>
    <property type="resolution" value="3.40 A"/>
    <property type="chains" value="LT=1-160"/>
</dbReference>
<dbReference type="PDB" id="7AZY">
    <property type="method" value="EM"/>
    <property type="resolution" value="2.88 A"/>
    <property type="chains" value="u=1-160"/>
</dbReference>
<dbReference type="PDB" id="7B7D">
    <property type="method" value="EM"/>
    <property type="resolution" value="3.30 A"/>
    <property type="chains" value="Lp=2-160"/>
</dbReference>
<dbReference type="PDB" id="7BT6">
    <property type="method" value="EM"/>
    <property type="resolution" value="3.12 A"/>
    <property type="chains" value="T=1-160"/>
</dbReference>
<dbReference type="PDB" id="7BTB">
    <property type="method" value="EM"/>
    <property type="resolution" value="3.22 A"/>
    <property type="chains" value="T=1-160"/>
</dbReference>
<dbReference type="PDB" id="7MPI">
    <property type="method" value="EM"/>
    <property type="resolution" value="3.05 A"/>
    <property type="chains" value="AT=2-160"/>
</dbReference>
<dbReference type="PDB" id="7MPJ">
    <property type="method" value="EM"/>
    <property type="resolution" value="2.70 A"/>
    <property type="chains" value="AT=2-160"/>
</dbReference>
<dbReference type="PDB" id="7N8B">
    <property type="method" value="EM"/>
    <property type="resolution" value="3.05 A"/>
    <property type="chains" value="AT=2-160"/>
</dbReference>
<dbReference type="PDB" id="7NAC">
    <property type="method" value="EM"/>
    <property type="resolution" value="3.04 A"/>
    <property type="chains" value="T=1-160"/>
</dbReference>
<dbReference type="PDB" id="7NRC">
    <property type="method" value="EM"/>
    <property type="resolution" value="3.90 A"/>
    <property type="chains" value="LV=2-160"/>
</dbReference>
<dbReference type="PDB" id="7NRD">
    <property type="method" value="EM"/>
    <property type="resolution" value="4.36 A"/>
    <property type="chains" value="LV=2-160"/>
</dbReference>
<dbReference type="PDB" id="7OF1">
    <property type="method" value="EM"/>
    <property type="resolution" value="3.10 A"/>
    <property type="chains" value="T=1-160"/>
</dbReference>
<dbReference type="PDB" id="7OH3">
    <property type="method" value="EM"/>
    <property type="resolution" value="3.40 A"/>
    <property type="chains" value="T=1-160"/>
</dbReference>
<dbReference type="PDB" id="7OHQ">
    <property type="method" value="EM"/>
    <property type="resolution" value="3.10 A"/>
    <property type="chains" value="T=1-160"/>
</dbReference>
<dbReference type="PDB" id="7OHT">
    <property type="method" value="EM"/>
    <property type="resolution" value="4.70 A"/>
    <property type="chains" value="T=1-160"/>
</dbReference>
<dbReference type="PDB" id="7R7A">
    <property type="method" value="EM"/>
    <property type="resolution" value="3.04 A"/>
    <property type="chains" value="T=1-160"/>
</dbReference>
<dbReference type="PDB" id="7TOO">
    <property type="method" value="EM"/>
    <property type="resolution" value="2.70 A"/>
    <property type="chains" value="AL21=1-160"/>
</dbReference>
<dbReference type="PDB" id="7TOP">
    <property type="method" value="EM"/>
    <property type="resolution" value="2.40 A"/>
    <property type="chains" value="AL21=1-160"/>
</dbReference>
<dbReference type="PDB" id="7U0H">
    <property type="method" value="EM"/>
    <property type="resolution" value="2.76 A"/>
    <property type="chains" value="T=1-160"/>
</dbReference>
<dbReference type="PDB" id="7UG6">
    <property type="method" value="EM"/>
    <property type="resolution" value="2.90 A"/>
    <property type="chains" value="T=1-160"/>
</dbReference>
<dbReference type="PDB" id="7UOO">
    <property type="method" value="EM"/>
    <property type="resolution" value="2.34 A"/>
    <property type="chains" value="T=1-160"/>
</dbReference>
<dbReference type="PDB" id="7UQB">
    <property type="method" value="EM"/>
    <property type="resolution" value="2.43 A"/>
    <property type="chains" value="T=1-160"/>
</dbReference>
<dbReference type="PDB" id="7UQZ">
    <property type="method" value="EM"/>
    <property type="resolution" value="2.44 A"/>
    <property type="chains" value="T=1-160"/>
</dbReference>
<dbReference type="PDB" id="7V08">
    <property type="method" value="EM"/>
    <property type="resolution" value="2.36 A"/>
    <property type="chains" value="T=1-160"/>
</dbReference>
<dbReference type="PDB" id="7Z34">
    <property type="method" value="EM"/>
    <property type="resolution" value="3.80 A"/>
    <property type="chains" value="T=1-160"/>
</dbReference>
<dbReference type="PDB" id="7ZPQ">
    <property type="method" value="EM"/>
    <property type="resolution" value="3.47 A"/>
    <property type="chains" value="BS=2-160"/>
</dbReference>
<dbReference type="PDB" id="7ZRS">
    <property type="method" value="EM"/>
    <property type="resolution" value="4.80 A"/>
    <property type="chains" value="BS=2-160"/>
</dbReference>
<dbReference type="PDB" id="7ZS5">
    <property type="method" value="EM"/>
    <property type="resolution" value="3.20 A"/>
    <property type="chains" value="BU=2-160"/>
</dbReference>
<dbReference type="PDB" id="7ZUW">
    <property type="method" value="EM"/>
    <property type="resolution" value="4.30 A"/>
    <property type="chains" value="BS=2-160"/>
</dbReference>
<dbReference type="PDB" id="7ZUX">
    <property type="method" value="EM"/>
    <property type="resolution" value="2.50 A"/>
    <property type="chains" value="ES=2-160"/>
</dbReference>
<dbReference type="PDB" id="7ZW0">
    <property type="method" value="EM"/>
    <property type="resolution" value="2.40 A"/>
    <property type="chains" value="LW=1-160"/>
</dbReference>
<dbReference type="PDB" id="8AAF">
    <property type="method" value="EM"/>
    <property type="resolution" value="2.50 A"/>
    <property type="chains" value="G=1-160"/>
</dbReference>
<dbReference type="PDB" id="8AGT">
    <property type="method" value="EM"/>
    <property type="resolution" value="2.60 A"/>
    <property type="chains" value="G=1-160"/>
</dbReference>
<dbReference type="PDB" id="8AGU">
    <property type="method" value="EM"/>
    <property type="resolution" value="2.70 A"/>
    <property type="chains" value="G=1-160"/>
</dbReference>
<dbReference type="PDB" id="8AGV">
    <property type="method" value="EM"/>
    <property type="resolution" value="2.60 A"/>
    <property type="chains" value="G=1-160"/>
</dbReference>
<dbReference type="PDB" id="8AGW">
    <property type="method" value="EM"/>
    <property type="resolution" value="2.60 A"/>
    <property type="chains" value="G=1-160"/>
</dbReference>
<dbReference type="PDB" id="8AGX">
    <property type="method" value="EM"/>
    <property type="resolution" value="2.40 A"/>
    <property type="chains" value="G=1-160"/>
</dbReference>
<dbReference type="PDB" id="8AGZ">
    <property type="method" value="EM"/>
    <property type="resolution" value="2.60 A"/>
    <property type="chains" value="G=1-160"/>
</dbReference>
<dbReference type="PDB" id="8BIP">
    <property type="method" value="EM"/>
    <property type="resolution" value="3.10 A"/>
    <property type="chains" value="LT=2-160"/>
</dbReference>
<dbReference type="PDB" id="8BJQ">
    <property type="method" value="EM"/>
    <property type="resolution" value="3.80 A"/>
    <property type="chains" value="LT=2-160"/>
</dbReference>
<dbReference type="PDB" id="8BN3">
    <property type="method" value="EM"/>
    <property type="resolution" value="2.40 A"/>
    <property type="chains" value="N1=2-160"/>
</dbReference>
<dbReference type="PDB" id="8BQD">
    <property type="method" value="EM"/>
    <property type="resolution" value="3.90 A"/>
    <property type="chains" value="BJ=2-160"/>
</dbReference>
<dbReference type="PDB" id="8BQX">
    <property type="method" value="EM"/>
    <property type="resolution" value="3.80 A"/>
    <property type="chains" value="BJ=2-160"/>
</dbReference>
<dbReference type="PDB" id="8CCS">
    <property type="method" value="EM"/>
    <property type="resolution" value="1.97 A"/>
    <property type="chains" value="F=1-160"/>
</dbReference>
<dbReference type="PDB" id="8CDL">
    <property type="method" value="EM"/>
    <property type="resolution" value="2.72 A"/>
    <property type="chains" value="F=1-160"/>
</dbReference>
<dbReference type="PDB" id="8CDR">
    <property type="method" value="EM"/>
    <property type="resolution" value="2.04 A"/>
    <property type="chains" value="F=1-160"/>
</dbReference>
<dbReference type="PDB" id="8CEH">
    <property type="method" value="EM"/>
    <property type="resolution" value="2.05 A"/>
    <property type="chains" value="F=1-160"/>
</dbReference>
<dbReference type="PDB" id="8CF5">
    <property type="method" value="EM"/>
    <property type="resolution" value="2.71 A"/>
    <property type="chains" value="F=1-160"/>
</dbReference>
<dbReference type="PDB" id="8CG8">
    <property type="method" value="EM"/>
    <property type="resolution" value="2.57 A"/>
    <property type="chains" value="F=1-160"/>
</dbReference>
<dbReference type="PDB" id="8CGN">
    <property type="method" value="EM"/>
    <property type="resolution" value="2.28 A"/>
    <property type="chains" value="F=1-160"/>
</dbReference>
<dbReference type="PDB" id="8CIV">
    <property type="method" value="EM"/>
    <property type="resolution" value="2.47 A"/>
    <property type="chains" value="F=1-160"/>
</dbReference>
<dbReference type="PDB" id="8CKU">
    <property type="method" value="EM"/>
    <property type="resolution" value="3.11 A"/>
    <property type="chains" value="F=1-160"/>
</dbReference>
<dbReference type="PDB" id="8CMJ">
    <property type="method" value="EM"/>
    <property type="resolution" value="3.79 A"/>
    <property type="chains" value="F=1-160"/>
</dbReference>
<dbReference type="PDB" id="8EUB">
    <property type="method" value="EM"/>
    <property type="resolution" value="2.52 A"/>
    <property type="chains" value="AT=1-160"/>
</dbReference>
<dbReference type="PDB" id="8EVP">
    <property type="method" value="EM"/>
    <property type="resolution" value="2.38 A"/>
    <property type="chains" value="AT=1-160"/>
</dbReference>
<dbReference type="PDB" id="8EVQ">
    <property type="method" value="EM"/>
    <property type="resolution" value="2.72 A"/>
    <property type="chains" value="AT=1-160"/>
</dbReference>
<dbReference type="PDB" id="8EVR">
    <property type="method" value="EM"/>
    <property type="resolution" value="2.87 A"/>
    <property type="chains" value="AT=1-160"/>
</dbReference>
<dbReference type="PDB" id="8EVS">
    <property type="method" value="EM"/>
    <property type="resolution" value="2.62 A"/>
    <property type="chains" value="AT=1-160"/>
</dbReference>
<dbReference type="PDB" id="8EVT">
    <property type="method" value="EM"/>
    <property type="resolution" value="2.20 A"/>
    <property type="chains" value="AT=1-160"/>
</dbReference>
<dbReference type="PDB" id="8EWB">
    <property type="method" value="EM"/>
    <property type="resolution" value="2.87 A"/>
    <property type="chains" value="AT=1-160"/>
</dbReference>
<dbReference type="PDB" id="8EWC">
    <property type="method" value="EM"/>
    <property type="resolution" value="2.45 A"/>
    <property type="chains" value="AT=1-160"/>
</dbReference>
<dbReference type="PDB" id="8HFR">
    <property type="method" value="EM"/>
    <property type="resolution" value="2.64 A"/>
    <property type="chains" value="Tl=1-160"/>
</dbReference>
<dbReference type="PDB" id="8K2D">
    <property type="method" value="EM"/>
    <property type="resolution" value="3.20 A"/>
    <property type="chains" value="LT=1-160"/>
</dbReference>
<dbReference type="PDB" id="8K82">
    <property type="method" value="EM"/>
    <property type="resolution" value="3.00 A"/>
    <property type="chains" value="LT=1-160"/>
</dbReference>
<dbReference type="PDB" id="8P4V">
    <property type="method" value="X-ray"/>
    <property type="resolution" value="3.16 A"/>
    <property type="chains" value="2/CV=1-160"/>
</dbReference>
<dbReference type="PDB" id="8P8M">
    <property type="method" value="EM"/>
    <property type="resolution" value="2.66 A"/>
    <property type="chains" value="QT=1-160"/>
</dbReference>
<dbReference type="PDB" id="8P8N">
    <property type="method" value="EM"/>
    <property type="resolution" value="2.15 A"/>
    <property type="chains" value="QT=1-160"/>
</dbReference>
<dbReference type="PDB" id="8P8U">
    <property type="method" value="EM"/>
    <property type="resolution" value="2.23 A"/>
    <property type="chains" value="QT=1-160"/>
</dbReference>
<dbReference type="PDB" id="8P9A">
    <property type="method" value="X-ray"/>
    <property type="resolution" value="2.90 A"/>
    <property type="chains" value="2/CV=1-160"/>
</dbReference>
<dbReference type="PDB" id="8PFR">
    <property type="method" value="EM"/>
    <property type="resolution" value="2.15 A"/>
    <property type="chains" value="QT=1-160"/>
</dbReference>
<dbReference type="PDB" id="8T2X">
    <property type="method" value="EM"/>
    <property type="resolution" value="2.46 A"/>
    <property type="chains" value="AT=1-160"/>
</dbReference>
<dbReference type="PDB" id="8T2Y">
    <property type="method" value="EM"/>
    <property type="resolution" value="2.20 A"/>
    <property type="chains" value="AT=1-160"/>
</dbReference>
<dbReference type="PDB" id="8T2Z">
    <property type="method" value="EM"/>
    <property type="resolution" value="2.40 A"/>
    <property type="chains" value="AT=1-160"/>
</dbReference>
<dbReference type="PDB" id="8T30">
    <property type="method" value="EM"/>
    <property type="resolution" value="2.88 A"/>
    <property type="chains" value="AT=1-160"/>
</dbReference>
<dbReference type="PDB" id="8T3A">
    <property type="method" value="EM"/>
    <property type="resolution" value="2.86 A"/>
    <property type="chains" value="AT=1-160"/>
</dbReference>
<dbReference type="PDB" id="8T3B">
    <property type="method" value="EM"/>
    <property type="resolution" value="3.08 A"/>
    <property type="chains" value="AT=1-160"/>
</dbReference>
<dbReference type="PDB" id="8T3C">
    <property type="method" value="EM"/>
    <property type="resolution" value="3.86 A"/>
    <property type="chains" value="AT=1-160"/>
</dbReference>
<dbReference type="PDB" id="8T3D">
    <property type="method" value="EM"/>
    <property type="resolution" value="2.95 A"/>
    <property type="chains" value="AT=1-160"/>
</dbReference>
<dbReference type="PDB" id="8T3E">
    <property type="method" value="EM"/>
    <property type="resolution" value="3.04 A"/>
    <property type="chains" value="AT=1-160"/>
</dbReference>
<dbReference type="PDB" id="8T3F">
    <property type="method" value="EM"/>
    <property type="resolution" value="3.09 A"/>
    <property type="chains" value="AT=1-160"/>
</dbReference>
<dbReference type="PDB" id="8UT0">
    <property type="method" value="EM"/>
    <property type="resolution" value="3.22 A"/>
    <property type="chains" value="LV=2-160"/>
</dbReference>
<dbReference type="PDB" id="8UTI">
    <property type="method" value="EM"/>
    <property type="resolution" value="3.13 A"/>
    <property type="chains" value="LV=2-160"/>
</dbReference>
<dbReference type="PDB" id="8XU8">
    <property type="method" value="EM"/>
    <property type="resolution" value="3.40 A"/>
    <property type="chains" value="V=2-160"/>
</dbReference>
<dbReference type="PDB" id="8Y0U">
    <property type="method" value="EM"/>
    <property type="resolution" value="3.59 A"/>
    <property type="chains" value="LT=1-160"/>
</dbReference>
<dbReference type="PDB" id="8YLD">
    <property type="method" value="EM"/>
    <property type="resolution" value="3.90 A"/>
    <property type="chains" value="V=2-160"/>
</dbReference>
<dbReference type="PDB" id="8YLR">
    <property type="method" value="EM"/>
    <property type="resolution" value="3.90 A"/>
    <property type="chains" value="V=2-160"/>
</dbReference>
<dbReference type="PDB" id="8Z70">
    <property type="method" value="EM"/>
    <property type="resolution" value="3.20 A"/>
    <property type="chains" value="V=2-160"/>
</dbReference>
<dbReference type="PDB" id="8Z71">
    <property type="method" value="EM"/>
    <property type="resolution" value="3.60 A"/>
    <property type="chains" value="V=2-160"/>
</dbReference>
<dbReference type="PDB" id="9F9S">
    <property type="method" value="EM"/>
    <property type="resolution" value="2.90 A"/>
    <property type="chains" value="LO/MO=1-160"/>
</dbReference>
<dbReference type="PDBsum" id="3J6X"/>
<dbReference type="PDBsum" id="3J6Y"/>
<dbReference type="PDBsum" id="3J77"/>
<dbReference type="PDBsum" id="3J78"/>
<dbReference type="PDBsum" id="3JCT"/>
<dbReference type="PDBsum" id="4U3M"/>
<dbReference type="PDBsum" id="4U3N"/>
<dbReference type="PDBsum" id="4U3U"/>
<dbReference type="PDBsum" id="4U4N"/>
<dbReference type="PDBsum" id="4U4O"/>
<dbReference type="PDBsum" id="4U4Q"/>
<dbReference type="PDBsum" id="4U4R"/>
<dbReference type="PDBsum" id="4U4U"/>
<dbReference type="PDBsum" id="4U4Y"/>
<dbReference type="PDBsum" id="4U4Z"/>
<dbReference type="PDBsum" id="4U50"/>
<dbReference type="PDBsum" id="4U51"/>
<dbReference type="PDBsum" id="4U52"/>
<dbReference type="PDBsum" id="4U53"/>
<dbReference type="PDBsum" id="4U55"/>
<dbReference type="PDBsum" id="4U56"/>
<dbReference type="PDBsum" id="4U6F"/>
<dbReference type="PDBsum" id="4V4B"/>
<dbReference type="PDBsum" id="4V5Z"/>
<dbReference type="PDBsum" id="4V6I"/>
<dbReference type="PDBsum" id="4V7F"/>
<dbReference type="PDBsum" id="4V7R"/>
<dbReference type="PDBsum" id="4V88"/>
<dbReference type="PDBsum" id="4V8T"/>
<dbReference type="PDBsum" id="4V8Y"/>
<dbReference type="PDBsum" id="4V8Z"/>
<dbReference type="PDBsum" id="4V91"/>
<dbReference type="PDBsum" id="5APN"/>
<dbReference type="PDBsum" id="5APO"/>
<dbReference type="PDBsum" id="5DAT"/>
<dbReference type="PDBsum" id="5DC3"/>
<dbReference type="PDBsum" id="5DGE"/>
<dbReference type="PDBsum" id="5DGF"/>
<dbReference type="PDBsum" id="5DGV"/>
<dbReference type="PDBsum" id="5FCI"/>
<dbReference type="PDBsum" id="5FCJ"/>
<dbReference type="PDBsum" id="5GAK"/>
<dbReference type="PDBsum" id="5H4P"/>
<dbReference type="PDBsum" id="5I4L"/>
<dbReference type="PDBsum" id="5JCS"/>
<dbReference type="PDBsum" id="5JUO"/>
<dbReference type="PDBsum" id="5JUP"/>
<dbReference type="PDBsum" id="5JUS"/>
<dbReference type="PDBsum" id="5JUT"/>
<dbReference type="PDBsum" id="5JUU"/>
<dbReference type="PDBsum" id="5LYB"/>
<dbReference type="PDBsum" id="5M1J"/>
<dbReference type="PDBsum" id="5MC6"/>
<dbReference type="PDBsum" id="5MEI"/>
<dbReference type="PDBsum" id="5NDG"/>
<dbReference type="PDBsum" id="5NDV"/>
<dbReference type="PDBsum" id="5NDW"/>
<dbReference type="PDBsum" id="5OBM"/>
<dbReference type="PDBsum" id="5ON6"/>
<dbReference type="PDBsum" id="5T62"/>
<dbReference type="PDBsum" id="5T6R"/>
<dbReference type="PDBsum" id="5TBW"/>
<dbReference type="PDBsum" id="5TGA"/>
<dbReference type="PDBsum" id="5TGM"/>
<dbReference type="PDBsum" id="6ELZ"/>
<dbReference type="PDBsum" id="6EM5"/>
<dbReference type="PDBsum" id="6FT6"/>
<dbReference type="PDBsum" id="6GQ1"/>
<dbReference type="PDBsum" id="6GQB"/>
<dbReference type="PDBsum" id="6GQV"/>
<dbReference type="PDBsum" id="6HD7"/>
<dbReference type="PDBsum" id="6HHQ"/>
<dbReference type="PDBsum" id="6I7O"/>
<dbReference type="PDBsum" id="6M62"/>
<dbReference type="PDBsum" id="6N8J"/>
<dbReference type="PDBsum" id="6N8K"/>
<dbReference type="PDBsum" id="6N8L"/>
<dbReference type="PDBsum" id="6N8M"/>
<dbReference type="PDBsum" id="6N8N"/>
<dbReference type="PDBsum" id="6N8O"/>
<dbReference type="PDBsum" id="6OIG"/>
<dbReference type="PDBsum" id="6Q8Y"/>
<dbReference type="PDBsum" id="6QIK"/>
<dbReference type="PDBsum" id="6QT0"/>
<dbReference type="PDBsum" id="6QTZ"/>
<dbReference type="PDBsum" id="6R84"/>
<dbReference type="PDBsum" id="6R86"/>
<dbReference type="PDBsum" id="6R87"/>
<dbReference type="PDBsum" id="6RI5"/>
<dbReference type="PDBsum" id="6RZZ"/>
<dbReference type="PDBsum" id="6S05"/>
<dbReference type="PDBsum" id="6S47"/>
<dbReference type="PDBsum" id="6SNT"/>
<dbReference type="PDBsum" id="6SV4"/>
<dbReference type="PDBsum" id="6T4Q"/>
<dbReference type="PDBsum" id="6T7I"/>
<dbReference type="PDBsum" id="6T7T"/>
<dbReference type="PDBsum" id="6T83"/>
<dbReference type="PDBsum" id="6TB3"/>
<dbReference type="PDBsum" id="6TNU"/>
<dbReference type="PDBsum" id="6WOO"/>
<dbReference type="PDBsum" id="6XIQ"/>
<dbReference type="PDBsum" id="6XIR"/>
<dbReference type="PDBsum" id="6YLG"/>
<dbReference type="PDBsum" id="6YLH"/>
<dbReference type="PDBsum" id="6YLX"/>
<dbReference type="PDBsum" id="6YLY"/>
<dbReference type="PDBsum" id="6Z6J"/>
<dbReference type="PDBsum" id="6Z6K"/>
<dbReference type="PDBsum" id="7AZY"/>
<dbReference type="PDBsum" id="7B7D"/>
<dbReference type="PDBsum" id="7BT6"/>
<dbReference type="PDBsum" id="7BTB"/>
<dbReference type="PDBsum" id="7MPI"/>
<dbReference type="PDBsum" id="7MPJ"/>
<dbReference type="PDBsum" id="7N8B"/>
<dbReference type="PDBsum" id="7NAC"/>
<dbReference type="PDBsum" id="7NRC"/>
<dbReference type="PDBsum" id="7NRD"/>
<dbReference type="PDBsum" id="7OF1"/>
<dbReference type="PDBsum" id="7OH3"/>
<dbReference type="PDBsum" id="7OHQ"/>
<dbReference type="PDBsum" id="7OHT"/>
<dbReference type="PDBsum" id="7R7A"/>
<dbReference type="PDBsum" id="7TOO"/>
<dbReference type="PDBsum" id="7TOP"/>
<dbReference type="PDBsum" id="7U0H"/>
<dbReference type="PDBsum" id="7UG6"/>
<dbReference type="PDBsum" id="7UOO"/>
<dbReference type="PDBsum" id="7UQB"/>
<dbReference type="PDBsum" id="7UQZ"/>
<dbReference type="PDBsum" id="7V08"/>
<dbReference type="PDBsum" id="7Z34"/>
<dbReference type="PDBsum" id="7ZPQ"/>
<dbReference type="PDBsum" id="7ZRS"/>
<dbReference type="PDBsum" id="7ZS5"/>
<dbReference type="PDBsum" id="7ZUW"/>
<dbReference type="PDBsum" id="7ZUX"/>
<dbReference type="PDBsum" id="7ZW0"/>
<dbReference type="PDBsum" id="8AAF"/>
<dbReference type="PDBsum" id="8AGT"/>
<dbReference type="PDBsum" id="8AGU"/>
<dbReference type="PDBsum" id="8AGV"/>
<dbReference type="PDBsum" id="8AGW"/>
<dbReference type="PDBsum" id="8AGX"/>
<dbReference type="PDBsum" id="8AGZ"/>
<dbReference type="PDBsum" id="8BIP"/>
<dbReference type="PDBsum" id="8BJQ"/>
<dbReference type="PDBsum" id="8BN3"/>
<dbReference type="PDBsum" id="8BQD"/>
<dbReference type="PDBsum" id="8BQX"/>
<dbReference type="PDBsum" id="8CCS"/>
<dbReference type="PDBsum" id="8CDL"/>
<dbReference type="PDBsum" id="8CDR"/>
<dbReference type="PDBsum" id="8CEH"/>
<dbReference type="PDBsum" id="8CF5"/>
<dbReference type="PDBsum" id="8CG8"/>
<dbReference type="PDBsum" id="8CGN"/>
<dbReference type="PDBsum" id="8CIV"/>
<dbReference type="PDBsum" id="8CKU"/>
<dbReference type="PDBsum" id="8CMJ"/>
<dbReference type="PDBsum" id="8EUB"/>
<dbReference type="PDBsum" id="8EVP"/>
<dbReference type="PDBsum" id="8EVQ"/>
<dbReference type="PDBsum" id="8EVR"/>
<dbReference type="PDBsum" id="8EVS"/>
<dbReference type="PDBsum" id="8EVT"/>
<dbReference type="PDBsum" id="8EWB"/>
<dbReference type="PDBsum" id="8EWC"/>
<dbReference type="PDBsum" id="8HFR"/>
<dbReference type="PDBsum" id="8K2D"/>
<dbReference type="PDBsum" id="8K82"/>
<dbReference type="PDBsum" id="8P4V"/>
<dbReference type="PDBsum" id="8P8M"/>
<dbReference type="PDBsum" id="8P8N"/>
<dbReference type="PDBsum" id="8P8U"/>
<dbReference type="PDBsum" id="8P9A"/>
<dbReference type="PDBsum" id="8PFR"/>
<dbReference type="PDBsum" id="8T2X"/>
<dbReference type="PDBsum" id="8T2Y"/>
<dbReference type="PDBsum" id="8T2Z"/>
<dbReference type="PDBsum" id="8T30"/>
<dbReference type="PDBsum" id="8T3A"/>
<dbReference type="PDBsum" id="8T3B"/>
<dbReference type="PDBsum" id="8T3C"/>
<dbReference type="PDBsum" id="8T3D"/>
<dbReference type="PDBsum" id="8T3E"/>
<dbReference type="PDBsum" id="8T3F"/>
<dbReference type="PDBsum" id="8UT0"/>
<dbReference type="PDBsum" id="8UTI"/>
<dbReference type="PDBsum" id="8XU8"/>
<dbReference type="PDBsum" id="8Y0U"/>
<dbReference type="PDBsum" id="8YLD"/>
<dbReference type="PDBsum" id="8YLR"/>
<dbReference type="PDBsum" id="8Z70"/>
<dbReference type="PDBsum" id="8Z71"/>
<dbReference type="PDBsum" id="9F9S"/>
<dbReference type="EMDB" id="EMD-0369"/>
<dbReference type="EMDB" id="EMD-0370"/>
<dbReference type="EMDB" id="EMD-0371"/>
<dbReference type="EMDB" id="EMD-0372"/>
<dbReference type="EMDB" id="EMD-0373"/>
<dbReference type="EMDB" id="EMD-10068"/>
<dbReference type="EMDB" id="EMD-10071"/>
<dbReference type="EMDB" id="EMD-10315"/>
<dbReference type="EMDB" id="EMD-10377"/>
<dbReference type="EMDB" id="EMD-10396"/>
<dbReference type="EMDB" id="EMD-10397"/>
<dbReference type="EMDB" id="EMD-10398"/>
<dbReference type="EMDB" id="EMD-10431"/>
<dbReference type="EMDB" id="EMD-10537"/>
<dbReference type="EMDB" id="EMD-10841"/>
<dbReference type="EMDB" id="EMD-10842"/>
<dbReference type="EMDB" id="EMD-11096"/>
<dbReference type="EMDB" id="EMD-11097"/>
<dbReference type="EMDB" id="EMD-11951"/>
<dbReference type="EMDB" id="EMD-12866"/>
<dbReference type="EMDB" id="EMD-12892"/>
<dbReference type="EMDB" id="EMD-12905"/>
<dbReference type="EMDB" id="EMD-12908"/>
<dbReference type="EMDB" id="EMD-14471"/>
<dbReference type="EMDB" id="EMD-14861"/>
<dbReference type="EMDB" id="EMD-14921"/>
<dbReference type="EMDB" id="EMD-14926"/>
<dbReference type="EMDB" id="EMD-14978"/>
<dbReference type="EMDB" id="EMD-14979"/>
<dbReference type="EMDB" id="EMD-14990"/>
<dbReference type="EMDB" id="EMD-15296"/>
<dbReference type="EMDB" id="EMD-15423"/>
<dbReference type="EMDB" id="EMD-15424"/>
<dbReference type="EMDB" id="EMD-15425"/>
<dbReference type="EMDB" id="EMD-15426"/>
<dbReference type="EMDB" id="EMD-15427"/>
<dbReference type="EMDB" id="EMD-15428"/>
<dbReference type="EMDB" id="EMD-16086"/>
<dbReference type="EMDB" id="EMD-16090"/>
<dbReference type="EMDB" id="EMD-16127"/>
<dbReference type="EMDB" id="EMD-16182"/>
<dbReference type="EMDB" id="EMD-16563"/>
<dbReference type="EMDB" id="EMD-16591"/>
<dbReference type="EMDB" id="EMD-16594"/>
<dbReference type="EMDB" id="EMD-16609"/>
<dbReference type="EMDB" id="EMD-16616"/>
<dbReference type="EMDB" id="EMD-16634"/>
<dbReference type="EMDB" id="EMD-16648"/>
<dbReference type="EMDB" id="EMD-16684"/>
<dbReference type="EMDB" id="EMD-16702"/>
<dbReference type="EMDB" id="EMD-16729"/>
<dbReference type="EMDB" id="EMD-17549"/>
<dbReference type="EMDB" id="EMD-17550"/>
<dbReference type="EMDB" id="EMD-17552"/>
<dbReference type="EMDB" id="EMD-17653"/>
<dbReference type="EMDB" id="EMD-20077"/>
<dbReference type="EMDB" id="EMD-21859"/>
<dbReference type="EMDB" id="EMD-22196"/>
<dbReference type="EMDB" id="EMD-22198"/>
<dbReference type="EMDB" id="EMD-23934"/>
<dbReference type="EMDB" id="EMD-23935"/>
<dbReference type="EMDB" id="EMD-24235"/>
<dbReference type="EMDB" id="EMD-24269"/>
<dbReference type="EMDB" id="EMD-24296"/>
<dbReference type="EMDB" id="EMD-26033"/>
<dbReference type="EMDB" id="EMD-26034"/>
<dbReference type="EMDB" id="EMD-26259"/>
<dbReference type="EMDB" id="EMD-26485"/>
<dbReference type="EMDB" id="EMD-26651"/>
<dbReference type="EMDB" id="EMD-26686"/>
<dbReference type="EMDB" id="EMD-26703"/>
<dbReference type="EMDB" id="EMD-26941"/>
<dbReference type="EMDB" id="EMD-28610"/>
<dbReference type="EMDB" id="EMD-28632"/>
<dbReference type="EMDB" id="EMD-28633"/>
<dbReference type="EMDB" id="EMD-28634"/>
<dbReference type="EMDB" id="EMD-28635"/>
<dbReference type="EMDB" id="EMD-28636"/>
<dbReference type="EMDB" id="EMD-28642"/>
<dbReference type="EMDB" id="EMD-28643"/>
<dbReference type="EMDB" id="EMD-30108"/>
<dbReference type="EMDB" id="EMD-30170"/>
<dbReference type="EMDB" id="EMD-30174"/>
<dbReference type="EMDB" id="EMD-34725"/>
<dbReference type="EMDB" id="EMD-36839"/>
<dbReference type="EMDB" id="EMD-36945"/>
<dbReference type="EMDB" id="EMD-38660"/>
<dbReference type="EMDB" id="EMD-40990"/>
<dbReference type="EMDB" id="EMD-40991"/>
<dbReference type="EMDB" id="EMD-40992"/>
<dbReference type="EMDB" id="EMD-40993"/>
<dbReference type="EMDB" id="EMD-40997"/>
<dbReference type="EMDB" id="EMD-40998"/>
<dbReference type="EMDB" id="EMD-40999"/>
<dbReference type="EMDB" id="EMD-41000"/>
<dbReference type="EMDB" id="EMD-41001"/>
<dbReference type="EMDB" id="EMD-41002"/>
<dbReference type="EMDB" id="EMD-4140"/>
<dbReference type="EMDB" id="EMD-42525"/>
<dbReference type="EMDB" id="EMD-42540"/>
<dbReference type="EMDB" id="EMD-4302"/>
<dbReference type="EMDB" id="EMD-4427"/>
<dbReference type="EMDB" id="EMD-4474"/>
<dbReference type="EMDB" id="EMD-4560"/>
<dbReference type="EMDB" id="EMD-4630"/>
<dbReference type="EMDB" id="EMD-4636"/>
<dbReference type="EMDB" id="EMD-4751"/>
<dbReference type="EMDB" id="EMD-4752"/>
<dbReference type="EMDB" id="EMD-4753"/>
<dbReference type="EMDB" id="EMD-4884"/>
<dbReference type="EMDB" id="EMD-50259"/>
<dbReference type="EMDB" id="EMD-8362"/>
<dbReference type="EMDB" id="EMD-8368"/>
<dbReference type="SMR" id="Q02753"/>
<dbReference type="BioGRID" id="32888">
    <property type="interactions" value="242"/>
</dbReference>
<dbReference type="ComplexPortal" id="CPX-1601">
    <property type="entry name" value="60S cytosolic large ribosomal subunit"/>
</dbReference>
<dbReference type="FunCoup" id="Q02753">
    <property type="interactions" value="983"/>
</dbReference>
<dbReference type="IntAct" id="Q02753">
    <property type="interactions" value="123"/>
</dbReference>
<dbReference type="MINT" id="Q02753"/>
<dbReference type="STRING" id="4932.YBR191W"/>
<dbReference type="iPTMnet" id="Q02753"/>
<dbReference type="PaxDb" id="4932-YBR191W"/>
<dbReference type="PeptideAtlas" id="Q02753"/>
<dbReference type="EnsemblFungi" id="YBR191W_mRNA">
    <property type="protein sequence ID" value="YBR191W"/>
    <property type="gene ID" value="YBR191W"/>
</dbReference>
<dbReference type="GeneID" id="852489"/>
<dbReference type="KEGG" id="sce:YBR191W"/>
<dbReference type="AGR" id="SGD:S000000395"/>
<dbReference type="SGD" id="S000000395">
    <property type="gene designation" value="RPL21A"/>
</dbReference>
<dbReference type="VEuPathDB" id="FungiDB:YBR191W"/>
<dbReference type="eggNOG" id="KOG1732">
    <property type="taxonomic scope" value="Eukaryota"/>
</dbReference>
<dbReference type="GeneTree" id="ENSGT00950000182922"/>
<dbReference type="HOGENOM" id="CLU_103610_0_1_1"/>
<dbReference type="InParanoid" id="Q02753"/>
<dbReference type="OMA" id="INYGDYV"/>
<dbReference type="OrthoDB" id="1539250at2759"/>
<dbReference type="BioCyc" id="YEAST:G3O-29133-MONOMER"/>
<dbReference type="Reactome" id="R-SCE-156827">
    <property type="pathway name" value="L13a-mediated translational silencing of Ceruloplasmin expression"/>
</dbReference>
<dbReference type="Reactome" id="R-SCE-1799339">
    <property type="pathway name" value="SRP-dependent cotranslational protein targeting to membrane"/>
</dbReference>
<dbReference type="Reactome" id="R-SCE-72689">
    <property type="pathway name" value="Formation of a pool of free 40S subunits"/>
</dbReference>
<dbReference type="Reactome" id="R-SCE-72706">
    <property type="pathway name" value="GTP hydrolysis and joining of the 60S ribosomal subunit"/>
</dbReference>
<dbReference type="Reactome" id="R-SCE-975956">
    <property type="pathway name" value="Nonsense Mediated Decay (NMD) independent of the Exon Junction Complex (EJC)"/>
</dbReference>
<dbReference type="Reactome" id="R-SCE-975957">
    <property type="pathway name" value="Nonsense Mediated Decay (NMD) enhanced by the Exon Junction Complex (EJC)"/>
</dbReference>
<dbReference type="BioGRID-ORCS" id="852489">
    <property type="hits" value="9 hits in 10 CRISPR screens"/>
</dbReference>
<dbReference type="ChiTaRS" id="RPL21A">
    <property type="organism name" value="yeast"/>
</dbReference>
<dbReference type="PRO" id="PR:Q02753"/>
<dbReference type="Proteomes" id="UP000002311">
    <property type="component" value="Chromosome II"/>
</dbReference>
<dbReference type="RNAct" id="Q02753">
    <property type="molecule type" value="protein"/>
</dbReference>
<dbReference type="GO" id="GO:0005829">
    <property type="term" value="C:cytosol"/>
    <property type="evidence" value="ECO:0000304"/>
    <property type="project" value="Reactome"/>
</dbReference>
<dbReference type="GO" id="GO:0022625">
    <property type="term" value="C:cytosolic large ribosomal subunit"/>
    <property type="evidence" value="ECO:0000314"/>
    <property type="project" value="SGD"/>
</dbReference>
<dbReference type="GO" id="GO:0003735">
    <property type="term" value="F:structural constituent of ribosome"/>
    <property type="evidence" value="ECO:0000318"/>
    <property type="project" value="GO_Central"/>
</dbReference>
<dbReference type="GO" id="GO:0002181">
    <property type="term" value="P:cytoplasmic translation"/>
    <property type="evidence" value="ECO:0000305"/>
    <property type="project" value="SGD"/>
</dbReference>
<dbReference type="FunFam" id="2.30.30.70:FF:000001">
    <property type="entry name" value="60S ribosomal protein L21"/>
    <property type="match status" value="1"/>
</dbReference>
<dbReference type="FunFam" id="6.10.250.3260:FF:000001">
    <property type="entry name" value="60S ribosomal protein L21"/>
    <property type="match status" value="1"/>
</dbReference>
<dbReference type="Gene3D" id="6.10.250.3260">
    <property type="match status" value="1"/>
</dbReference>
<dbReference type="Gene3D" id="2.30.30.70">
    <property type="entry name" value="Ribosomal protein L21"/>
    <property type="match status" value="1"/>
</dbReference>
<dbReference type="InterPro" id="IPR001147">
    <property type="entry name" value="Ribosomal_eL21"/>
</dbReference>
<dbReference type="InterPro" id="IPR018259">
    <property type="entry name" value="Ribosomal_eL21_CS"/>
</dbReference>
<dbReference type="InterPro" id="IPR036948">
    <property type="entry name" value="Ribosomal_eL21_sf"/>
</dbReference>
<dbReference type="InterPro" id="IPR008991">
    <property type="entry name" value="Translation_prot_SH3-like_sf"/>
</dbReference>
<dbReference type="PANTHER" id="PTHR20981">
    <property type="entry name" value="60S RIBOSOMAL PROTEIN L21"/>
    <property type="match status" value="1"/>
</dbReference>
<dbReference type="Pfam" id="PF01157">
    <property type="entry name" value="Ribosomal_L21e"/>
    <property type="match status" value="1"/>
</dbReference>
<dbReference type="SUPFAM" id="SSF50104">
    <property type="entry name" value="Translation proteins SH3-like domain"/>
    <property type="match status" value="1"/>
</dbReference>
<dbReference type="PROSITE" id="PS01171">
    <property type="entry name" value="RIBOSOMAL_L21E"/>
    <property type="match status" value="1"/>
</dbReference>
<reference key="1">
    <citation type="journal article" date="1993" name="Curr. Genet.">
        <title>Yeast single copy gene URP1 is a homolog of rat ribosomal protein gene L21.</title>
        <authorList>
            <person name="Jank B."/>
            <person name="Waldherr M."/>
            <person name="Schweyen R.J."/>
        </authorList>
    </citation>
    <scope>NUCLEOTIDE SEQUENCE [GENOMIC DNA]</scope>
</reference>
<reference key="2">
    <citation type="journal article" date="1994" name="EMBO J.">
        <title>Complete DNA sequence of yeast chromosome II.</title>
        <authorList>
            <person name="Feldmann H."/>
            <person name="Aigle M."/>
            <person name="Aljinovic G."/>
            <person name="Andre B."/>
            <person name="Baclet M.C."/>
            <person name="Barthe C."/>
            <person name="Baur A."/>
            <person name="Becam A.-M."/>
            <person name="Biteau N."/>
            <person name="Boles E."/>
            <person name="Brandt T."/>
            <person name="Brendel M."/>
            <person name="Brueckner M."/>
            <person name="Bussereau F."/>
            <person name="Christiansen C."/>
            <person name="Contreras R."/>
            <person name="Crouzet M."/>
            <person name="Cziepluch C."/>
            <person name="Demolis N."/>
            <person name="Delaveau T."/>
            <person name="Doignon F."/>
            <person name="Domdey H."/>
            <person name="Duesterhus S."/>
            <person name="Dubois E."/>
            <person name="Dujon B."/>
            <person name="El Bakkoury M."/>
            <person name="Entian K.-D."/>
            <person name="Feuermann M."/>
            <person name="Fiers W."/>
            <person name="Fobo G.M."/>
            <person name="Fritz C."/>
            <person name="Gassenhuber J."/>
            <person name="Glansdorff N."/>
            <person name="Goffeau A."/>
            <person name="Grivell L.A."/>
            <person name="de Haan M."/>
            <person name="Hein C."/>
            <person name="Herbert C.J."/>
            <person name="Hollenberg C.P."/>
            <person name="Holmstroem K."/>
            <person name="Jacq C."/>
            <person name="Jacquet M."/>
            <person name="Jauniaux J.-C."/>
            <person name="Jonniaux J.-L."/>
            <person name="Kallesoee T."/>
            <person name="Kiesau P."/>
            <person name="Kirchrath L."/>
            <person name="Koetter P."/>
            <person name="Korol S."/>
            <person name="Liebl S."/>
            <person name="Logghe M."/>
            <person name="Lohan A.J.E."/>
            <person name="Louis E.J."/>
            <person name="Li Z.Y."/>
            <person name="Maat M.J."/>
            <person name="Mallet L."/>
            <person name="Mannhaupt G."/>
            <person name="Messenguy F."/>
            <person name="Miosga T."/>
            <person name="Molemans F."/>
            <person name="Mueller S."/>
            <person name="Nasr F."/>
            <person name="Obermaier B."/>
            <person name="Perea J."/>
            <person name="Pierard A."/>
            <person name="Piravandi E."/>
            <person name="Pohl F.M."/>
            <person name="Pohl T.M."/>
            <person name="Potier S."/>
            <person name="Proft M."/>
            <person name="Purnelle B."/>
            <person name="Ramezani Rad M."/>
            <person name="Rieger M."/>
            <person name="Rose M."/>
            <person name="Schaaff-Gerstenschlaeger I."/>
            <person name="Scherens B."/>
            <person name="Schwarzlose C."/>
            <person name="Skala J."/>
            <person name="Slonimski P.P."/>
            <person name="Smits P.H.M."/>
            <person name="Souciet J.-L."/>
            <person name="Steensma H.Y."/>
            <person name="Stucka R."/>
            <person name="Urrestarazu L.A."/>
            <person name="van der Aart Q.J.M."/>
            <person name="Van Dyck L."/>
            <person name="Vassarotti A."/>
            <person name="Vetter I."/>
            <person name="Vierendeels F."/>
            <person name="Vissers S."/>
            <person name="Wagner G."/>
            <person name="de Wergifosse P."/>
            <person name="Wolfe K.H."/>
            <person name="Zagulski M."/>
            <person name="Zimmermann F.K."/>
            <person name="Mewes H.-W."/>
            <person name="Kleine K."/>
        </authorList>
    </citation>
    <scope>NUCLEOTIDE SEQUENCE [LARGE SCALE GENOMIC DNA]</scope>
    <source>
        <strain>ATCC 204508 / S288c</strain>
    </source>
</reference>
<reference key="3">
    <citation type="journal article" date="2014" name="G3 (Bethesda)">
        <title>The reference genome sequence of Saccharomyces cerevisiae: Then and now.</title>
        <authorList>
            <person name="Engel S.R."/>
            <person name="Dietrich F.S."/>
            <person name="Fisk D.G."/>
            <person name="Binkley G."/>
            <person name="Balakrishnan R."/>
            <person name="Costanzo M.C."/>
            <person name="Dwight S.S."/>
            <person name="Hitz B.C."/>
            <person name="Karra K."/>
            <person name="Nash R.S."/>
            <person name="Weng S."/>
            <person name="Wong E.D."/>
            <person name="Lloyd P."/>
            <person name="Skrzypek M.S."/>
            <person name="Miyasato S.R."/>
            <person name="Simison M."/>
            <person name="Cherry J.M."/>
        </authorList>
    </citation>
    <scope>GENOME REANNOTATION</scope>
    <source>
        <strain>ATCC 204508 / S288c</strain>
    </source>
</reference>
<reference key="4">
    <citation type="journal article" date="1994" name="Yeast">
        <title>A 12.5 kb fragment of the yeast chromosome II contains two adjacent genes encoding ribosomal proteins and six putative new genes, one of which encodes a putative transcriptional factor.</title>
        <authorList>
            <person name="Demolis N."/>
            <person name="Jacquet M."/>
            <person name="Mallet L."/>
        </authorList>
    </citation>
    <scope>NUCLEOTIDE SEQUENCE [GENOMIC DNA] OF 1-39</scope>
    <source>
        <strain>ATCC 204508 / S288c</strain>
    </source>
</reference>
<reference key="5">
    <citation type="journal article" date="1993" name="Yeast">
        <title>RIM2, MSI1 and PGI1 are located within an 8 kb segment of Saccharomyces cerevisiae chromosome II, which also contains the putative ribosomal gene L21 and a new putative essential gene with a leucine zipper motif.</title>
        <authorList>
            <person name="Demolis N."/>
            <person name="Mallet L."/>
            <person name="Bussereau F."/>
            <person name="Jacquet M."/>
        </authorList>
    </citation>
    <scope>NUCLEOTIDE SEQUENCE [GENOMIC DNA] OF 40-160</scope>
    <source>
        <strain>ATCC 204508 / S288c</strain>
    </source>
</reference>
<reference key="6">
    <citation type="journal article" date="1998" name="Yeast">
        <title>The list of cytoplasmic ribosomal proteins of Saccharomyces cerevisiae.</title>
        <authorList>
            <person name="Planta R.J."/>
            <person name="Mager W.H."/>
        </authorList>
    </citation>
    <scope>NOMENCLATURE</scope>
    <scope>SUBUNIT</scope>
</reference>
<reference key="7">
    <citation type="journal article" date="1999" name="J. Biol. Chem.">
        <title>The action of N-terminal acetyltransferases on yeast ribosomal proteins.</title>
        <authorList>
            <person name="Arnold R.J."/>
            <person name="Polevoda B."/>
            <person name="Reilly J.P."/>
            <person name="Sherman F."/>
        </authorList>
    </citation>
    <scope>CLEAVAGE OF INITIATOR METHIONINE</scope>
</reference>
<reference key="8">
    <citation type="journal article" date="2003" name="Nature">
        <title>Global analysis of protein localization in budding yeast.</title>
        <authorList>
            <person name="Huh W.-K."/>
            <person name="Falvo J.V."/>
            <person name="Gerke L.C."/>
            <person name="Carroll A.S."/>
            <person name="Howson R.W."/>
            <person name="Weissman J.S."/>
            <person name="O'Shea E.K."/>
        </authorList>
    </citation>
    <scope>SUBCELLULAR LOCATION [LARGE SCALE ANALYSIS]</scope>
</reference>
<reference key="9">
    <citation type="journal article" date="2014" name="Curr. Opin. Struct. Biol.">
        <title>A new system for naming ribosomal proteins.</title>
        <authorList>
            <person name="Ban N."/>
            <person name="Beckmann R."/>
            <person name="Cate J.H.D."/>
            <person name="Dinman J.D."/>
            <person name="Dragon F."/>
            <person name="Ellis S.R."/>
            <person name="Lafontaine D.L.J."/>
            <person name="Lindahl L."/>
            <person name="Liljas A."/>
            <person name="Lipton J.M."/>
            <person name="McAlear M.A."/>
            <person name="Moore P.B."/>
            <person name="Noller H.F."/>
            <person name="Ortega J."/>
            <person name="Panse V.G."/>
            <person name="Ramakrishnan V."/>
            <person name="Spahn C.M.T."/>
            <person name="Steitz T.A."/>
            <person name="Tchorzewski M."/>
            <person name="Tollervey D."/>
            <person name="Warren A.J."/>
            <person name="Williamson J.R."/>
            <person name="Wilson D."/>
            <person name="Yonath A."/>
            <person name="Yusupov M."/>
        </authorList>
    </citation>
    <scope>NOMENCLATURE</scope>
</reference>
<reference key="10">
    <citation type="journal article" date="2001" name="Cell">
        <title>Structure of the 80S ribosome from Saccharomyces cerevisiae -- tRNA-ribosome and subunit-subunit interactions.</title>
        <authorList>
            <person name="Spahn C.M.T."/>
            <person name="Beckmann R."/>
            <person name="Eswar N."/>
            <person name="Penczek P.A."/>
            <person name="Sali A."/>
            <person name="Blobel G."/>
            <person name="Frank J."/>
        </authorList>
    </citation>
    <scope>3D-STRUCTURE MODELING OF 4-100</scope>
    <scope>ELECTRON MICROSCOPY</scope>
</reference>
<reference key="11">
    <citation type="journal article" date="2004" name="EMBO J.">
        <title>Domain movements of elongation factor eEF2 and the eukaryotic 80S ribosome facilitate tRNA translocation.</title>
        <authorList>
            <person name="Spahn C.M.T."/>
            <person name="Gomez-Lorenzo M.G."/>
            <person name="Grassucci R.A."/>
            <person name="Joergensen R."/>
            <person name="Andersen G.R."/>
            <person name="Beckmann R."/>
            <person name="Penczek P.A."/>
            <person name="Ballesta J.P.G."/>
            <person name="Frank J."/>
        </authorList>
    </citation>
    <scope>3D-STRUCTURE MODELING OF 2-100</scope>
    <scope>ELECTRON MICROSCOPY</scope>
</reference>
<reference key="12">
    <citation type="journal article" date="2010" name="Science">
        <title>Crystal structure of the eukaryotic ribosome.</title>
        <authorList>
            <person name="Ben-Shem A."/>
            <person name="Jenner L."/>
            <person name="Yusupova G."/>
            <person name="Yusupov M."/>
        </authorList>
    </citation>
    <scope>X-RAY CRYSTALLOGRAPHY (4.0 ANGSTROMS) OF 80S RIBOSOME</scope>
</reference>
<reference key="13">
    <citation type="journal article" date="2011" name="Science">
        <title>The structure of the eukaryotic ribosome at 3.0 A resolution.</title>
        <authorList>
            <person name="Ben-Shem A."/>
            <person name="Garreau de Loubresse N."/>
            <person name="Melnikov S."/>
            <person name="Jenner L."/>
            <person name="Yusupova G."/>
            <person name="Yusupov M."/>
        </authorList>
    </citation>
    <scope>X-RAY CRYSTALLOGRAPHY (3.0 ANGSTROMS) OF 80S RIBOSOME</scope>
    <scope>SUBUNIT</scope>
    <scope>SUBCELLULAR LOCATION</scope>
</reference>
<name>RL21A_YEAST</name>
<gene>
    <name evidence="6" type="primary">RPL21A</name>
    <name type="synonym">URP1</name>
    <name type="ordered locus">YBR191W</name>
    <name type="ORF">YBR1401</name>
</gene>
<feature type="initiator methionine" description="Removed" evidence="2">
    <location>
        <position position="1"/>
    </location>
</feature>
<feature type="chain" id="PRO_0000149682" description="Large ribosomal subunit protein eL21A">
    <location>
        <begin position="2"/>
        <end position="160"/>
    </location>
</feature>
<feature type="cross-link" description="Glycyl lysine isopeptide (Lys-Gly) (interchain with G-Cter in ubiquitin)" evidence="1">
    <location>
        <position position="32"/>
    </location>
</feature>
<feature type="turn" evidence="11">
    <location>
        <begin position="7"/>
        <end position="10"/>
    </location>
</feature>
<feature type="turn" evidence="11">
    <location>
        <begin position="12"/>
        <end position="14"/>
    </location>
</feature>
<feature type="helix" evidence="11">
    <location>
        <begin position="28"/>
        <end position="31"/>
    </location>
</feature>
<feature type="strand" evidence="11">
    <location>
        <begin position="39"/>
        <end position="42"/>
    </location>
</feature>
<feature type="helix" evidence="11">
    <location>
        <begin position="55"/>
        <end position="57"/>
    </location>
</feature>
<feature type="strand" evidence="11">
    <location>
        <begin position="61"/>
        <end position="67"/>
    </location>
</feature>
<feature type="strand" evidence="11">
    <location>
        <begin position="69"/>
        <end position="80"/>
    </location>
</feature>
<feature type="strand" evidence="11">
    <location>
        <begin position="83"/>
        <end position="92"/>
    </location>
</feature>
<feature type="helix" evidence="11">
    <location>
        <begin position="93"/>
        <end position="95"/>
    </location>
</feature>
<feature type="strand" evidence="11">
    <location>
        <begin position="96"/>
        <end position="98"/>
    </location>
</feature>
<feature type="helix" evidence="10">
    <location>
        <begin position="100"/>
        <end position="102"/>
    </location>
</feature>
<feature type="helix" evidence="11">
    <location>
        <begin position="103"/>
        <end position="120"/>
    </location>
</feature>
<feature type="turn" evidence="11">
    <location>
        <begin position="121"/>
        <end position="123"/>
    </location>
</feature>
<sequence length="160" mass="18242">MGKSHGYRSRTRYMFQRDFRKHGAVHLSTYLKVYKVGDIVDIKANGSIQKGMPHKFYQGKTGVVYNVTKSSVGVIINKMVGNRYLEKRLNLRVEHIKHSKCRQEFLERVKANAAKRAEAKAQGVAVQLKRQPAQPRESRIVSTEGNVPQTLAPVPYETFI</sequence>
<comment type="function">
    <text evidence="8">Component of the ribosome, a large ribonucleoprotein complex responsible for the synthesis of proteins in the cell. The small ribosomal subunit (SSU) binds messenger RNAs (mRNAs) and translates the encoded message by selecting cognate aminoacyl-transfer RNA (tRNA) molecules. The large subunit (LSU) contains the ribosomal catalytic site termed the peptidyl transferase center (PTC), which catalyzes the formation of peptide bonds, thereby polymerizing the amino acids delivered by tRNAs into a polypeptide chain. The nascent polypeptides leave the ribosome through a tunnel in the LSU and interact with protein factors that function in enzymatic processing, targeting, and the membrane insertion of nascent chains at the exit of the ribosomal tunnel.</text>
</comment>
<comment type="subunit">
    <text evidence="4 9">Component of the large ribosomal subunit (LSU). Mature yeast ribosomes consist of a small (40S) and a large (60S) subunit. The 40S small subunit contains 1 molecule of ribosomal RNA (18S rRNA) and 33 different proteins (encoded by 57 genes). The large 60S subunit contains 3 rRNA molecules (25S, 5.8S and 5S rRNA) and 46 different proteins (encoded by 81 genes) (PubMed:22096102, PubMed:9559554).</text>
</comment>
<comment type="subcellular location">
    <subcellularLocation>
        <location evidence="3 4">Cytoplasm</location>
    </subcellularLocation>
</comment>
<comment type="miscellaneous">
    <text evidence="7">There are 2 genes for eL21 in yeast.</text>
</comment>
<comment type="similarity">
    <text evidence="7">Belongs to the eukaryotic ribosomal protein eL21 family.</text>
</comment>
<keyword id="KW-0002">3D-structure</keyword>
<keyword id="KW-0963">Cytoplasm</keyword>
<keyword id="KW-1017">Isopeptide bond</keyword>
<keyword id="KW-1185">Reference proteome</keyword>
<keyword id="KW-0687">Ribonucleoprotein</keyword>
<keyword id="KW-0689">Ribosomal protein</keyword>
<keyword id="KW-0832">Ubl conjugation</keyword>
<accession>Q02753</accession>
<accession>D6VQI5</accession>
<protein>
    <recommendedName>
        <fullName evidence="5">Large ribosomal subunit protein eL21A</fullName>
    </recommendedName>
    <alternativeName>
        <fullName evidence="6">60S ribosomal protein L21-A</fullName>
    </alternativeName>
</protein>
<organism>
    <name type="scientific">Saccharomyces cerevisiae (strain ATCC 204508 / S288c)</name>
    <name type="common">Baker's yeast</name>
    <dbReference type="NCBI Taxonomy" id="559292"/>
    <lineage>
        <taxon>Eukaryota</taxon>
        <taxon>Fungi</taxon>
        <taxon>Dikarya</taxon>
        <taxon>Ascomycota</taxon>
        <taxon>Saccharomycotina</taxon>
        <taxon>Saccharomycetes</taxon>
        <taxon>Saccharomycetales</taxon>
        <taxon>Saccharomycetaceae</taxon>
        <taxon>Saccharomyces</taxon>
    </lineage>
</organism>
<evidence type="ECO:0000250" key="1">
    <source>
        <dbReference type="UniProtKB" id="Q12672"/>
    </source>
</evidence>
<evidence type="ECO:0000269" key="2">
    <source>
    </source>
</evidence>
<evidence type="ECO:0000269" key="3">
    <source>
    </source>
</evidence>
<evidence type="ECO:0000269" key="4">
    <source>
    </source>
</evidence>
<evidence type="ECO:0000303" key="5">
    <source>
    </source>
</evidence>
<evidence type="ECO:0000303" key="6">
    <source>
    </source>
</evidence>
<evidence type="ECO:0000305" key="7"/>
<evidence type="ECO:0000305" key="8">
    <source>
    </source>
</evidence>
<evidence type="ECO:0000305" key="9">
    <source>
    </source>
</evidence>
<evidence type="ECO:0007829" key="10">
    <source>
        <dbReference type="PDB" id="4U3M"/>
    </source>
</evidence>
<evidence type="ECO:0007829" key="11">
    <source>
        <dbReference type="PDB" id="4U4R"/>
    </source>
</evidence>